<dbReference type="EC" id="2.1.1.6" evidence="2"/>
<dbReference type="SMR" id="Q99028"/>
<dbReference type="FunCoup" id="Q99028">
    <property type="interactions" value="2"/>
</dbReference>
<dbReference type="STRING" id="9823.ENSSSCP00000068977"/>
<dbReference type="BindingDB" id="Q99028"/>
<dbReference type="ChEMBL" id="CHEMBL2176837"/>
<dbReference type="PaxDb" id="9823-ENSSSCP00000010805"/>
<dbReference type="PeptideAtlas" id="Q99028"/>
<dbReference type="eggNOG" id="KOG1663">
    <property type="taxonomic scope" value="Eukaryota"/>
</dbReference>
<dbReference type="InParanoid" id="Q99028"/>
<dbReference type="ChiTaRS" id="COMT">
    <property type="organism name" value="pig"/>
</dbReference>
<dbReference type="Proteomes" id="UP000008227">
    <property type="component" value="Unplaced"/>
</dbReference>
<dbReference type="Proteomes" id="UP000314985">
    <property type="component" value="Unplaced"/>
</dbReference>
<dbReference type="Proteomes" id="UP000694570">
    <property type="component" value="Unplaced"/>
</dbReference>
<dbReference type="Proteomes" id="UP000694571">
    <property type="component" value="Unplaced"/>
</dbReference>
<dbReference type="Proteomes" id="UP000694720">
    <property type="component" value="Unplaced"/>
</dbReference>
<dbReference type="Proteomes" id="UP000694722">
    <property type="component" value="Unplaced"/>
</dbReference>
<dbReference type="Proteomes" id="UP000694723">
    <property type="component" value="Unplaced"/>
</dbReference>
<dbReference type="Proteomes" id="UP000694724">
    <property type="component" value="Unplaced"/>
</dbReference>
<dbReference type="Proteomes" id="UP000694725">
    <property type="component" value="Unplaced"/>
</dbReference>
<dbReference type="Proteomes" id="UP000694726">
    <property type="component" value="Unplaced"/>
</dbReference>
<dbReference type="Proteomes" id="UP000694727">
    <property type="component" value="Unplaced"/>
</dbReference>
<dbReference type="Proteomes" id="UP000694728">
    <property type="component" value="Unplaced"/>
</dbReference>
<dbReference type="GO" id="GO:0030424">
    <property type="term" value="C:axon"/>
    <property type="evidence" value="ECO:0000318"/>
    <property type="project" value="GO_Central"/>
</dbReference>
<dbReference type="GO" id="GO:0005829">
    <property type="term" value="C:cytosol"/>
    <property type="evidence" value="ECO:0000250"/>
    <property type="project" value="UniProtKB"/>
</dbReference>
<dbReference type="GO" id="GO:0030425">
    <property type="term" value="C:dendrite"/>
    <property type="evidence" value="ECO:0000318"/>
    <property type="project" value="GO_Central"/>
</dbReference>
<dbReference type="GO" id="GO:0016020">
    <property type="term" value="C:membrane"/>
    <property type="evidence" value="ECO:0000318"/>
    <property type="project" value="GO_Central"/>
</dbReference>
<dbReference type="GO" id="GO:0005886">
    <property type="term" value="C:plasma membrane"/>
    <property type="evidence" value="ECO:0007669"/>
    <property type="project" value="UniProtKB-SubCell"/>
</dbReference>
<dbReference type="GO" id="GO:0016206">
    <property type="term" value="F:catechol O-methyltransferase activity"/>
    <property type="evidence" value="ECO:0000250"/>
    <property type="project" value="UniProtKB"/>
</dbReference>
<dbReference type="GO" id="GO:0000287">
    <property type="term" value="F:magnesium ion binding"/>
    <property type="evidence" value="ECO:0007669"/>
    <property type="project" value="InterPro"/>
</dbReference>
<dbReference type="GO" id="GO:0042424">
    <property type="term" value="P:catecholamine catabolic process"/>
    <property type="evidence" value="ECO:0000250"/>
    <property type="project" value="UniProtKB"/>
</dbReference>
<dbReference type="GO" id="GO:0032502">
    <property type="term" value="P:developmental process"/>
    <property type="evidence" value="ECO:0000318"/>
    <property type="project" value="GO_Central"/>
</dbReference>
<dbReference type="GO" id="GO:0042417">
    <property type="term" value="P:dopamine metabolic process"/>
    <property type="evidence" value="ECO:0000318"/>
    <property type="project" value="GO_Central"/>
</dbReference>
<dbReference type="GO" id="GO:0006629">
    <property type="term" value="P:lipid metabolic process"/>
    <property type="evidence" value="ECO:0007669"/>
    <property type="project" value="UniProtKB-KW"/>
</dbReference>
<dbReference type="GO" id="GO:0032259">
    <property type="term" value="P:methylation"/>
    <property type="evidence" value="ECO:0000250"/>
    <property type="project" value="UniProtKB"/>
</dbReference>
<dbReference type="CDD" id="cd02440">
    <property type="entry name" value="AdoMet_MTases"/>
    <property type="match status" value="1"/>
</dbReference>
<dbReference type="FunFam" id="3.40.50.150:FF:000054">
    <property type="entry name" value="Catechol O-methyltransferase"/>
    <property type="match status" value="1"/>
</dbReference>
<dbReference type="Gene3D" id="3.40.50.150">
    <property type="entry name" value="Vaccinia Virus protein VP39"/>
    <property type="match status" value="1"/>
</dbReference>
<dbReference type="InterPro" id="IPR017128">
    <property type="entry name" value="Catechol_O-MeTrfase_euk"/>
</dbReference>
<dbReference type="InterPro" id="IPR029063">
    <property type="entry name" value="SAM-dependent_MTases_sf"/>
</dbReference>
<dbReference type="InterPro" id="IPR002935">
    <property type="entry name" value="SAM_O-MeTrfase"/>
</dbReference>
<dbReference type="PANTHER" id="PTHR43836:SF3">
    <property type="entry name" value="CATECHOL O-METHYLTRANSFERASE"/>
    <property type="match status" value="1"/>
</dbReference>
<dbReference type="PANTHER" id="PTHR43836">
    <property type="entry name" value="CATECHOL O-METHYLTRANSFERASE 1-RELATED"/>
    <property type="match status" value="1"/>
</dbReference>
<dbReference type="Pfam" id="PF01596">
    <property type="entry name" value="Methyltransf_3"/>
    <property type="match status" value="1"/>
</dbReference>
<dbReference type="PIRSF" id="PIRSF037177">
    <property type="entry name" value="Catechol_O-mtfrase_euk"/>
    <property type="match status" value="1"/>
</dbReference>
<dbReference type="SUPFAM" id="SSF53335">
    <property type="entry name" value="S-adenosyl-L-methionine-dependent methyltransferases"/>
    <property type="match status" value="1"/>
</dbReference>
<dbReference type="PROSITE" id="PS51682">
    <property type="entry name" value="SAM_OMT_I"/>
    <property type="match status" value="1"/>
</dbReference>
<name>COMT_PIG</name>
<comment type="function">
    <text evidence="2">Catalyzes the O-methylation, and thereby the inactivation, of catecholamine neurotransmitters and catechol hormones. Also shortens the biological half-lives of certain neuroactive drugs, like L-DOPA, alpha-methyl DOPA and isoproterenol.</text>
</comment>
<comment type="catalytic activity">
    <reaction evidence="2">
        <text>a catechol + S-adenosyl-L-methionine = a guaiacol + S-adenosyl-L-homocysteine + H(+)</text>
        <dbReference type="Rhea" id="RHEA:17877"/>
        <dbReference type="ChEBI" id="CHEBI:15378"/>
        <dbReference type="ChEBI" id="CHEBI:33566"/>
        <dbReference type="ChEBI" id="CHEBI:57856"/>
        <dbReference type="ChEBI" id="CHEBI:59789"/>
        <dbReference type="ChEBI" id="CHEBI:134251"/>
        <dbReference type="EC" id="2.1.1.6"/>
    </reaction>
    <physiologicalReaction direction="left-to-right" evidence="2">
        <dbReference type="Rhea" id="RHEA:17878"/>
    </physiologicalReaction>
</comment>
<comment type="catalytic activity">
    <reaction evidence="2">
        <text>2-hydroxyestrone + S-adenosyl-L-methionine = 2-hydroxy-3-methoxy-estrone + S-adenosyl-L-homocysteine + H(+)</text>
        <dbReference type="Rhea" id="RHEA:53108"/>
        <dbReference type="ChEBI" id="CHEBI:1156"/>
        <dbReference type="ChEBI" id="CHEBI:15378"/>
        <dbReference type="ChEBI" id="CHEBI:57856"/>
        <dbReference type="ChEBI" id="CHEBI:59789"/>
        <dbReference type="ChEBI" id="CHEBI:136980"/>
    </reaction>
    <physiologicalReaction direction="left-to-right" evidence="2">
        <dbReference type="Rhea" id="RHEA:53109"/>
    </physiologicalReaction>
</comment>
<comment type="catalytic activity">
    <reaction evidence="2">
        <text>4-hydroxyestrone + S-adenosyl-L-methionine = 4-methoxyestrone + S-adenosyl-L-homocysteine + H(+)</text>
        <dbReference type="Rhea" id="RHEA:53104"/>
        <dbReference type="ChEBI" id="CHEBI:15378"/>
        <dbReference type="ChEBI" id="CHEBI:57856"/>
        <dbReference type="ChEBI" id="CHEBI:59789"/>
        <dbReference type="ChEBI" id="CHEBI:87602"/>
        <dbReference type="ChEBI" id="CHEBI:136972"/>
    </reaction>
    <physiologicalReaction direction="left-to-right" evidence="2">
        <dbReference type="Rhea" id="RHEA:53105"/>
    </physiologicalReaction>
</comment>
<comment type="catalytic activity">
    <reaction evidence="2">
        <text>2-hydroxyestrone + S-adenosyl-L-methionine = 2-methoxyestrone + S-adenosyl-L-homocysteine + H(+)</text>
        <dbReference type="Rhea" id="RHEA:53100"/>
        <dbReference type="ChEBI" id="CHEBI:1156"/>
        <dbReference type="ChEBI" id="CHEBI:1189"/>
        <dbReference type="ChEBI" id="CHEBI:15378"/>
        <dbReference type="ChEBI" id="CHEBI:57856"/>
        <dbReference type="ChEBI" id="CHEBI:59789"/>
    </reaction>
    <physiologicalReaction direction="left-to-right" evidence="2">
        <dbReference type="Rhea" id="RHEA:53101"/>
    </physiologicalReaction>
</comment>
<comment type="catalytic activity">
    <reaction evidence="2">
        <text>4-hydroxy-17beta-estradiol + S-adenosyl-L-methionine = 4-methoxy-17beta-estradiol + S-adenosyl-L-homocysteine + H(+)</text>
        <dbReference type="Rhea" id="RHEA:53096"/>
        <dbReference type="ChEBI" id="CHEBI:15378"/>
        <dbReference type="ChEBI" id="CHEBI:57856"/>
        <dbReference type="ChEBI" id="CHEBI:59789"/>
        <dbReference type="ChEBI" id="CHEBI:62845"/>
        <dbReference type="ChEBI" id="CHEBI:136975"/>
    </reaction>
    <physiologicalReaction direction="left-to-right" evidence="2">
        <dbReference type="Rhea" id="RHEA:53097"/>
    </physiologicalReaction>
</comment>
<comment type="catalytic activity">
    <reaction evidence="2">
        <text>2-hydroxy-17beta-estradiol + S-adenosyl-L-methionine = 2-hydroxy-3-methoxy-17beta-estradiol + S-adenosyl-L-homocysteine + H(+)</text>
        <dbReference type="Rhea" id="RHEA:53092"/>
        <dbReference type="ChEBI" id="CHEBI:15378"/>
        <dbReference type="ChEBI" id="CHEBI:28744"/>
        <dbReference type="ChEBI" id="CHEBI:57856"/>
        <dbReference type="ChEBI" id="CHEBI:59789"/>
        <dbReference type="ChEBI" id="CHEBI:89268"/>
    </reaction>
    <physiologicalReaction direction="left-to-right" evidence="2">
        <dbReference type="Rhea" id="RHEA:53093"/>
    </physiologicalReaction>
</comment>
<comment type="catalytic activity">
    <reaction evidence="2">
        <text>2-hydroxy-17beta-estradiol + S-adenosyl-L-methionine = 2-methoxy-17beta-estradiol + S-adenosyl-L-homocysteine + H(+)</text>
        <dbReference type="Rhea" id="RHEA:53088"/>
        <dbReference type="ChEBI" id="CHEBI:15378"/>
        <dbReference type="ChEBI" id="CHEBI:28744"/>
        <dbReference type="ChEBI" id="CHEBI:28955"/>
        <dbReference type="ChEBI" id="CHEBI:57856"/>
        <dbReference type="ChEBI" id="CHEBI:59789"/>
    </reaction>
    <physiologicalReaction direction="left-to-right" evidence="2">
        <dbReference type="Rhea" id="RHEA:53089"/>
    </physiologicalReaction>
</comment>
<comment type="cofactor">
    <cofactor evidence="3">
        <name>Mg(2+)</name>
        <dbReference type="ChEBI" id="CHEBI:18420"/>
    </cofactor>
    <text evidence="3">Binds 1 Mg(2+) ion per subunit.</text>
</comment>
<comment type="subcellular location">
    <subcellularLocation>
        <location evidence="3">Cytoplasm</location>
    </subcellularLocation>
    <subcellularLocation>
        <location evidence="3">Cell membrane</location>
        <topology evidence="3">Single-pass type II membrane protein</topology>
        <orientation evidence="3">Extracellular side</orientation>
    </subcellularLocation>
</comment>
<comment type="similarity">
    <text evidence="4">Belongs to the class I-like SAM-binding methyltransferase superfamily. Cation-dependent O-methyltransferase family.</text>
</comment>
<proteinExistence type="evidence at protein level"/>
<protein>
    <recommendedName>
        <fullName evidence="5">Catechol O-methyltransferase</fullName>
        <ecNumber evidence="2">2.1.1.6</ecNumber>
    </recommendedName>
</protein>
<accession>Q99028</accession>
<organism>
    <name type="scientific">Sus scrofa</name>
    <name type="common">Pig</name>
    <dbReference type="NCBI Taxonomy" id="9823"/>
    <lineage>
        <taxon>Eukaryota</taxon>
        <taxon>Metazoa</taxon>
        <taxon>Chordata</taxon>
        <taxon>Craniata</taxon>
        <taxon>Vertebrata</taxon>
        <taxon>Euteleostomi</taxon>
        <taxon>Mammalia</taxon>
        <taxon>Eutheria</taxon>
        <taxon>Laurasiatheria</taxon>
        <taxon>Artiodactyla</taxon>
        <taxon>Suina</taxon>
        <taxon>Suidae</taxon>
        <taxon>Sus</taxon>
    </lineage>
</organism>
<reference key="1">
    <citation type="journal article" date="1991" name="Proc. Natl. Acad. Sci. U.S.A.">
        <title>Human catechol-O-methyltransferase: cloning and expression of the membrane-associated form.</title>
        <authorList>
            <person name="Bertocci B."/>
            <person name="Miggiano V."/>
            <person name="da Prada M."/>
            <person name="Dembic Z."/>
            <person name="Lahm H.-W."/>
            <person name="Malherbe P."/>
        </authorList>
    </citation>
    <scope>NUCLEOTIDE SEQUENCE [MRNA]</scope>
</reference>
<reference key="2">
    <citation type="journal article" date="1991" name="Biochim. Biophys. Acta">
        <title>Immunoaffinity purification and partial amino acid sequence analysis of catechol-O-methyltransferase from pig liver.</title>
        <authorList>
            <person name="Bertocci B."/>
            <person name="Garotta G."/>
            <person name="da Prada M."/>
            <person name="Lahm H.-W."/>
            <person name="Zurcher G."/>
            <person name="Virgallita G."/>
            <person name="Miggiano V."/>
        </authorList>
    </citation>
    <scope>PARTIAL PROTEIN SEQUENCE</scope>
    <source>
        <tissue>Liver</tissue>
    </source>
</reference>
<keyword id="KW-0128">Catecholamine metabolism</keyword>
<keyword id="KW-1003">Cell membrane</keyword>
<keyword id="KW-0963">Cytoplasm</keyword>
<keyword id="KW-0903">Direct protein sequencing</keyword>
<keyword id="KW-0443">Lipid metabolism</keyword>
<keyword id="KW-0460">Magnesium</keyword>
<keyword id="KW-0472">Membrane</keyword>
<keyword id="KW-0479">Metal-binding</keyword>
<keyword id="KW-0489">Methyltransferase</keyword>
<keyword id="KW-0531">Neurotransmitter degradation</keyword>
<keyword id="KW-0597">Phosphoprotein</keyword>
<keyword id="KW-1185">Reference proteome</keyword>
<keyword id="KW-0949">S-adenosyl-L-methionine</keyword>
<keyword id="KW-0808">Transferase</keyword>
<gene>
    <name type="primary">COMT</name>
</gene>
<feature type="chain" id="PRO_0000090016" description="Catechol O-methyltransferase">
    <location>
        <begin position="1" status="less than"/>
        <end position="186"/>
    </location>
</feature>
<feature type="binding site" evidence="4">
    <location>
        <position position="7"/>
    </location>
    <ligand>
        <name>S-adenosyl-L-methionine</name>
        <dbReference type="ChEBI" id="CHEBI:59789"/>
    </ligand>
</feature>
<feature type="binding site" evidence="4">
    <location>
        <position position="29"/>
    </location>
    <ligand>
        <name>S-adenosyl-L-methionine</name>
        <dbReference type="ChEBI" id="CHEBI:59789"/>
    </ligand>
</feature>
<feature type="binding site" evidence="4">
    <location>
        <position position="37"/>
    </location>
    <ligand>
        <name>S-adenosyl-L-methionine</name>
        <dbReference type="ChEBI" id="CHEBI:59789"/>
    </ligand>
</feature>
<feature type="binding site" evidence="4">
    <location>
        <position position="55"/>
    </location>
    <ligand>
        <name>S-adenosyl-L-methionine</name>
        <dbReference type="ChEBI" id="CHEBI:59789"/>
    </ligand>
</feature>
<feature type="binding site" evidence="4">
    <location>
        <position position="56"/>
    </location>
    <ligand>
        <name>S-adenosyl-L-methionine</name>
        <dbReference type="ChEBI" id="CHEBI:59789"/>
    </ligand>
</feature>
<feature type="binding site" evidence="4">
    <location>
        <begin position="82"/>
        <end position="85"/>
    </location>
    <ligand>
        <name>S-adenosyl-L-methionine</name>
        <dbReference type="ChEBI" id="CHEBI:59789"/>
    </ligand>
</feature>
<feature type="binding site" evidence="4">
    <location>
        <position position="84"/>
    </location>
    <ligand>
        <name>S-adenosyl-L-methionine</name>
        <dbReference type="ChEBI" id="CHEBI:59789"/>
    </ligand>
</feature>
<feature type="binding site" evidence="1">
    <location>
        <position position="106"/>
    </location>
    <ligand>
        <name>Mg(2+)</name>
        <dbReference type="ChEBI" id="CHEBI:18420"/>
    </ligand>
</feature>
<feature type="binding site" evidence="4">
    <location>
        <position position="106"/>
    </location>
    <ligand>
        <name>S-adenosyl-L-methionine</name>
        <dbReference type="ChEBI" id="CHEBI:59789"/>
    </ligand>
</feature>
<feature type="binding site" evidence="1">
    <location>
        <position position="109"/>
    </location>
    <ligand>
        <name>substrate</name>
    </ligand>
</feature>
<feature type="binding site" evidence="1">
    <location>
        <position position="134"/>
    </location>
    <ligand>
        <name>Mg(2+)</name>
        <dbReference type="ChEBI" id="CHEBI:18420"/>
    </ligand>
</feature>
<feature type="binding site" evidence="1">
    <location>
        <position position="135"/>
    </location>
    <ligand>
        <name>Mg(2+)</name>
        <dbReference type="ChEBI" id="CHEBI:18420"/>
    </ligand>
</feature>
<feature type="binding site" evidence="1">
    <location>
        <position position="135"/>
    </location>
    <ligand>
        <name>substrate</name>
    </ligand>
</feature>
<feature type="binding site" evidence="1">
    <location>
        <position position="164"/>
    </location>
    <ligand>
        <name>substrate</name>
    </ligand>
</feature>
<feature type="modified residue" description="Phosphoserine" evidence="3">
    <location>
        <position position="182"/>
    </location>
</feature>
<feature type="non-terminal residue">
    <location>
        <position position="1"/>
    </location>
</feature>
<evidence type="ECO:0000250" key="1"/>
<evidence type="ECO:0000250" key="2">
    <source>
        <dbReference type="UniProtKB" id="P21964"/>
    </source>
</evidence>
<evidence type="ECO:0000250" key="3">
    <source>
        <dbReference type="UniProtKB" id="P22734"/>
    </source>
</evidence>
<evidence type="ECO:0000255" key="4">
    <source>
        <dbReference type="PROSITE-ProRule" id="PRU01019"/>
    </source>
</evidence>
<evidence type="ECO:0000305" key="5"/>
<sequence length="186" mass="20587">KERAMHVGRKKGQIVDTVVQEQRPSVLLELGAYCGYSAVRMARLLLPSARLLTIELNPDNAAIAQQVVDFAGLQDRVTVVVGASQDIIPQLKKKYDVDTLDMVFLDHWKDRYLPDTLLLEECGLLRKGTVLLADNVICPGAPDFLAHVRGCGRFECTHFSSYLEYSQMVDGLEKAVYKGPGSPAQP</sequence>